<feature type="chain" id="PRO_0000282444" description="ATP-dependent RNA helicase fal1">
    <location>
        <begin position="1"/>
        <end position="399"/>
    </location>
</feature>
<feature type="domain" description="Helicase ATP-binding" evidence="2">
    <location>
        <begin position="56"/>
        <end position="226"/>
    </location>
</feature>
<feature type="domain" description="Helicase C-terminal" evidence="3">
    <location>
        <begin position="237"/>
        <end position="398"/>
    </location>
</feature>
<feature type="short sequence motif" description="Q motif">
    <location>
        <begin position="25"/>
        <end position="53"/>
    </location>
</feature>
<feature type="short sequence motif" description="DEAD box">
    <location>
        <begin position="174"/>
        <end position="177"/>
    </location>
</feature>
<feature type="binding site" evidence="2">
    <location>
        <begin position="69"/>
        <end position="76"/>
    </location>
    <ligand>
        <name>ATP</name>
        <dbReference type="ChEBI" id="CHEBI:30616"/>
    </ligand>
</feature>
<name>FAL1_ASPCL</name>
<gene>
    <name type="primary">fal1</name>
    <name type="ORF">ACLA_002740</name>
</gene>
<dbReference type="EC" id="3.6.4.13"/>
<dbReference type="EMBL" id="DS027004">
    <property type="protein sequence ID" value="EAW14863.1"/>
    <property type="molecule type" value="Genomic_DNA"/>
</dbReference>
<dbReference type="RefSeq" id="XP_001276289.1">
    <property type="nucleotide sequence ID" value="XM_001276288.1"/>
</dbReference>
<dbReference type="SMR" id="A1C595"/>
<dbReference type="STRING" id="344612.A1C595"/>
<dbReference type="EnsemblFungi" id="EAW14863">
    <property type="protein sequence ID" value="EAW14863"/>
    <property type="gene ID" value="ACLA_002740"/>
</dbReference>
<dbReference type="GeneID" id="4708510"/>
<dbReference type="KEGG" id="act:ACLA_002740"/>
<dbReference type="VEuPathDB" id="FungiDB:ACLA_002740"/>
<dbReference type="eggNOG" id="KOG0328">
    <property type="taxonomic scope" value="Eukaryota"/>
</dbReference>
<dbReference type="HOGENOM" id="CLU_003041_1_0_1"/>
<dbReference type="OMA" id="TRFHDFK"/>
<dbReference type="OrthoDB" id="10265785at2759"/>
<dbReference type="Proteomes" id="UP000006701">
    <property type="component" value="Unassembled WGS sequence"/>
</dbReference>
<dbReference type="GO" id="GO:0030874">
    <property type="term" value="C:nucleolar chromatin"/>
    <property type="evidence" value="ECO:0007669"/>
    <property type="project" value="EnsemblFungi"/>
</dbReference>
<dbReference type="GO" id="GO:0005524">
    <property type="term" value="F:ATP binding"/>
    <property type="evidence" value="ECO:0007669"/>
    <property type="project" value="UniProtKB-KW"/>
</dbReference>
<dbReference type="GO" id="GO:0016887">
    <property type="term" value="F:ATP hydrolysis activity"/>
    <property type="evidence" value="ECO:0007669"/>
    <property type="project" value="RHEA"/>
</dbReference>
<dbReference type="GO" id="GO:0003723">
    <property type="term" value="F:RNA binding"/>
    <property type="evidence" value="ECO:0007669"/>
    <property type="project" value="UniProtKB-KW"/>
</dbReference>
<dbReference type="GO" id="GO:0003724">
    <property type="term" value="F:RNA helicase activity"/>
    <property type="evidence" value="ECO:0007669"/>
    <property type="project" value="UniProtKB-EC"/>
</dbReference>
<dbReference type="GO" id="GO:0006364">
    <property type="term" value="P:rRNA processing"/>
    <property type="evidence" value="ECO:0007669"/>
    <property type="project" value="UniProtKB-KW"/>
</dbReference>
<dbReference type="CDD" id="cd18045">
    <property type="entry name" value="DEADc_EIF4AIII_DDX48"/>
    <property type="match status" value="1"/>
</dbReference>
<dbReference type="CDD" id="cd18787">
    <property type="entry name" value="SF2_C_DEAD"/>
    <property type="match status" value="1"/>
</dbReference>
<dbReference type="FunFam" id="3.40.50.300:FF:000031">
    <property type="entry name" value="Eukaryotic initiation factor 4A-III"/>
    <property type="match status" value="1"/>
</dbReference>
<dbReference type="FunFam" id="3.40.50.300:FF:000498">
    <property type="entry name" value="Eukaryotic initiation factor 4A-III"/>
    <property type="match status" value="1"/>
</dbReference>
<dbReference type="Gene3D" id="3.40.50.300">
    <property type="entry name" value="P-loop containing nucleotide triphosphate hydrolases"/>
    <property type="match status" value="2"/>
</dbReference>
<dbReference type="InterPro" id="IPR011545">
    <property type="entry name" value="DEAD/DEAH_box_helicase_dom"/>
</dbReference>
<dbReference type="InterPro" id="IPR014001">
    <property type="entry name" value="Helicase_ATP-bd"/>
</dbReference>
<dbReference type="InterPro" id="IPR001650">
    <property type="entry name" value="Helicase_C-like"/>
</dbReference>
<dbReference type="InterPro" id="IPR027417">
    <property type="entry name" value="P-loop_NTPase"/>
</dbReference>
<dbReference type="InterPro" id="IPR000629">
    <property type="entry name" value="RNA-helicase_DEAD-box_CS"/>
</dbReference>
<dbReference type="InterPro" id="IPR014014">
    <property type="entry name" value="RNA_helicase_DEAD_Q_motif"/>
</dbReference>
<dbReference type="PANTHER" id="PTHR47958">
    <property type="entry name" value="ATP-DEPENDENT RNA HELICASE DBP3"/>
    <property type="match status" value="1"/>
</dbReference>
<dbReference type="Pfam" id="PF00270">
    <property type="entry name" value="DEAD"/>
    <property type="match status" value="1"/>
</dbReference>
<dbReference type="Pfam" id="PF00271">
    <property type="entry name" value="Helicase_C"/>
    <property type="match status" value="1"/>
</dbReference>
<dbReference type="SMART" id="SM00487">
    <property type="entry name" value="DEXDc"/>
    <property type="match status" value="1"/>
</dbReference>
<dbReference type="SMART" id="SM00490">
    <property type="entry name" value="HELICc"/>
    <property type="match status" value="1"/>
</dbReference>
<dbReference type="SUPFAM" id="SSF52540">
    <property type="entry name" value="P-loop containing nucleoside triphosphate hydrolases"/>
    <property type="match status" value="1"/>
</dbReference>
<dbReference type="PROSITE" id="PS00039">
    <property type="entry name" value="DEAD_ATP_HELICASE"/>
    <property type="match status" value="1"/>
</dbReference>
<dbReference type="PROSITE" id="PS51192">
    <property type="entry name" value="HELICASE_ATP_BIND_1"/>
    <property type="match status" value="1"/>
</dbReference>
<dbReference type="PROSITE" id="PS51194">
    <property type="entry name" value="HELICASE_CTER"/>
    <property type="match status" value="1"/>
</dbReference>
<dbReference type="PROSITE" id="PS51195">
    <property type="entry name" value="Q_MOTIF"/>
    <property type="match status" value="1"/>
</dbReference>
<evidence type="ECO:0000250" key="1"/>
<evidence type="ECO:0000255" key="2">
    <source>
        <dbReference type="PROSITE-ProRule" id="PRU00541"/>
    </source>
</evidence>
<evidence type="ECO:0000255" key="3">
    <source>
        <dbReference type="PROSITE-ProRule" id="PRU00542"/>
    </source>
</evidence>
<evidence type="ECO:0000305" key="4"/>
<protein>
    <recommendedName>
        <fullName>ATP-dependent RNA helicase fal1</fullName>
        <ecNumber>3.6.4.13</ecNumber>
    </recommendedName>
</protein>
<keyword id="KW-0067">ATP-binding</keyword>
<keyword id="KW-0347">Helicase</keyword>
<keyword id="KW-0378">Hydrolase</keyword>
<keyword id="KW-0547">Nucleotide-binding</keyword>
<keyword id="KW-0539">Nucleus</keyword>
<keyword id="KW-1185">Reference proteome</keyword>
<keyword id="KW-0690">Ribosome biogenesis</keyword>
<keyword id="KW-0694">RNA-binding</keyword>
<keyword id="KW-0698">rRNA processing</keyword>
<sequence>MADGIDRRNDDRLEFSTSKEVTVAPTFEDMHLKESLLRGIYAYGYESPSAVQSRAIVQICKGRDTIAQAQSGTGKTATFSISILQVIDTAVRETQALVLSPTRELATQIQSVIMALGDYMNVQCHACIGGTNIGEDIRKLDYGQHVVSGTPGRVADMIRRRHLRTRHIKMLVLDEADELLNRGFREQIYDVYRYLPPATQVVVVSATLPYDVLDMTTKFMTDPVRVLVKRDELTLEGIKQYFIAVEKEEWKFDTLCDLYDTLTITQAVIFCNTRRKVDWLTDKMREANFTVSSMHGEMPQKERDSIMQDFRQGNSRVLISTDVWARGIDVQQVSLVINYDLPTNRENYIHRIGRSGRFGRKGVAINFVTSDDVRILRDIELYYSTQIDEMPMNVADLLS</sequence>
<proteinExistence type="inferred from homology"/>
<organism>
    <name type="scientific">Aspergillus clavatus (strain ATCC 1007 / CBS 513.65 / DSM 816 / NCTC 3887 / NRRL 1 / QM 1276 / 107)</name>
    <dbReference type="NCBI Taxonomy" id="344612"/>
    <lineage>
        <taxon>Eukaryota</taxon>
        <taxon>Fungi</taxon>
        <taxon>Dikarya</taxon>
        <taxon>Ascomycota</taxon>
        <taxon>Pezizomycotina</taxon>
        <taxon>Eurotiomycetes</taxon>
        <taxon>Eurotiomycetidae</taxon>
        <taxon>Eurotiales</taxon>
        <taxon>Aspergillaceae</taxon>
        <taxon>Aspergillus</taxon>
        <taxon>Aspergillus subgen. Fumigati</taxon>
    </lineage>
</organism>
<accession>A1C595</accession>
<comment type="function">
    <text evidence="1">ATP-dependent RNA helicase involved in 40S ribosomal subunit biogenesis. Required for the processing and cleavage of 35S pre-rRNA at sites A0, A1, and A2, leading to mature 18S rRNA (By similarity).</text>
</comment>
<comment type="catalytic activity">
    <reaction>
        <text>ATP + H2O = ADP + phosphate + H(+)</text>
        <dbReference type="Rhea" id="RHEA:13065"/>
        <dbReference type="ChEBI" id="CHEBI:15377"/>
        <dbReference type="ChEBI" id="CHEBI:15378"/>
        <dbReference type="ChEBI" id="CHEBI:30616"/>
        <dbReference type="ChEBI" id="CHEBI:43474"/>
        <dbReference type="ChEBI" id="CHEBI:456216"/>
        <dbReference type="EC" id="3.6.4.13"/>
    </reaction>
</comment>
<comment type="subcellular location">
    <subcellularLocation>
        <location evidence="1">Nucleus</location>
        <location evidence="1">Nucleolus</location>
    </subcellularLocation>
</comment>
<comment type="domain">
    <text>The Q motif is unique to and characteristic of the DEAD box family of RNA helicases and controls ATP binding and hydrolysis.</text>
</comment>
<comment type="similarity">
    <text evidence="4">Belongs to the DEAD box helicase family. DDX48/FAL1 subfamily.</text>
</comment>
<reference key="1">
    <citation type="journal article" date="2008" name="PLoS Genet.">
        <title>Genomic islands in the pathogenic filamentous fungus Aspergillus fumigatus.</title>
        <authorList>
            <person name="Fedorova N.D."/>
            <person name="Khaldi N."/>
            <person name="Joardar V.S."/>
            <person name="Maiti R."/>
            <person name="Amedeo P."/>
            <person name="Anderson M.J."/>
            <person name="Crabtree J."/>
            <person name="Silva J.C."/>
            <person name="Badger J.H."/>
            <person name="Albarraq A."/>
            <person name="Angiuoli S."/>
            <person name="Bussey H."/>
            <person name="Bowyer P."/>
            <person name="Cotty P.J."/>
            <person name="Dyer P.S."/>
            <person name="Egan A."/>
            <person name="Galens K."/>
            <person name="Fraser-Liggett C.M."/>
            <person name="Haas B.J."/>
            <person name="Inman J.M."/>
            <person name="Kent R."/>
            <person name="Lemieux S."/>
            <person name="Malavazi I."/>
            <person name="Orvis J."/>
            <person name="Roemer T."/>
            <person name="Ronning C.M."/>
            <person name="Sundaram J.P."/>
            <person name="Sutton G."/>
            <person name="Turner G."/>
            <person name="Venter J.C."/>
            <person name="White O.R."/>
            <person name="Whitty B.R."/>
            <person name="Youngman P."/>
            <person name="Wolfe K.H."/>
            <person name="Goldman G.H."/>
            <person name="Wortman J.R."/>
            <person name="Jiang B."/>
            <person name="Denning D.W."/>
            <person name="Nierman W.C."/>
        </authorList>
    </citation>
    <scope>NUCLEOTIDE SEQUENCE [LARGE SCALE GENOMIC DNA]</scope>
    <source>
        <strain>ATCC 1007 / CBS 513.65 / DSM 816 / NCTC 3887 / NRRL 1 / QM 1276 / 107</strain>
    </source>
</reference>